<sequence length="521" mass="54791">MAKAATPKTTAAAEAKPAAKAPAKKAAPKTTAAAKPAATKSGAPKAAAAGAIGHITQVIGAVVDVKFPEGQLPLILNALEVDNQGHRLVLEVAQHLGEDTVRTIAMDATEGLVRGQEARDTGEPIMVPVGVETLGRIMNVIGEPVDEAGPIKTKATRAIHQNAPEYIEQSTEAEILVTGIKVVDLLAPYAKGGKIGLFGGAGVGKTVLIMELINNVAKAHGGYSVFAGVGERTREGNDLYHEMIESGVNKLGGGEGSKAALVYGQMNEPPGARARVALSGLTVAENFRDQGQDVLFFVDNIFRFTQAGSEVSALLGRIPSAVGYQPTLATDMGAMQERITTTTKGSITSVQAIYVPADDLTDPAPATSFAHLDATTVLSRSIAEKGIYPAVDPLDSTSRMIDPKVVGEEHYAVARQVQSILQRYKALQDIIAILGMDELSEEDKLTVARARKIERFLSQPFFVAEVFTGSPGKLVDLADTIKGFKGLCAGDYDHLPEAAFYMVGSIEEALEKAKKLAAEAA</sequence>
<evidence type="ECO:0000255" key="1">
    <source>
        <dbReference type="HAMAP-Rule" id="MF_01347"/>
    </source>
</evidence>
<evidence type="ECO:0000256" key="2">
    <source>
        <dbReference type="SAM" id="MobiDB-lite"/>
    </source>
</evidence>
<protein>
    <recommendedName>
        <fullName evidence="1">ATP synthase subunit beta</fullName>
        <ecNumber evidence="1">7.1.2.2</ecNumber>
    </recommendedName>
    <alternativeName>
        <fullName evidence="1">ATP synthase F1 sector subunit beta</fullName>
    </alternativeName>
    <alternativeName>
        <fullName evidence="1">F-ATPase subunit beta</fullName>
    </alternativeName>
</protein>
<accession>Q2YLE6</accession>
<gene>
    <name evidence="1" type="primary">atpD</name>
    <name type="ordered locus">BAB1_1807</name>
</gene>
<comment type="function">
    <text evidence="1">Produces ATP from ADP in the presence of a proton gradient across the membrane. The catalytic sites are hosted primarily by the beta subunits.</text>
</comment>
<comment type="catalytic activity">
    <reaction evidence="1">
        <text>ATP + H2O + 4 H(+)(in) = ADP + phosphate + 5 H(+)(out)</text>
        <dbReference type="Rhea" id="RHEA:57720"/>
        <dbReference type="ChEBI" id="CHEBI:15377"/>
        <dbReference type="ChEBI" id="CHEBI:15378"/>
        <dbReference type="ChEBI" id="CHEBI:30616"/>
        <dbReference type="ChEBI" id="CHEBI:43474"/>
        <dbReference type="ChEBI" id="CHEBI:456216"/>
        <dbReference type="EC" id="7.1.2.2"/>
    </reaction>
</comment>
<comment type="subunit">
    <text evidence="1">F-type ATPases have 2 components, CF(1) - the catalytic core - and CF(0) - the membrane proton channel. CF(1) has five subunits: alpha(3), beta(3), gamma(1), delta(1), epsilon(1). CF(0) has three main subunits: a(1), b(2) and c(9-12). The alpha and beta chains form an alternating ring which encloses part of the gamma chain. CF(1) is attached to CF(0) by a central stalk formed by the gamma and epsilon chains, while a peripheral stalk is formed by the delta and b chains.</text>
</comment>
<comment type="subcellular location">
    <subcellularLocation>
        <location evidence="1">Cell inner membrane</location>
        <topology evidence="1">Peripheral membrane protein</topology>
    </subcellularLocation>
</comment>
<comment type="similarity">
    <text evidence="1">Belongs to the ATPase alpha/beta chains family.</text>
</comment>
<keyword id="KW-0066">ATP synthesis</keyword>
<keyword id="KW-0067">ATP-binding</keyword>
<keyword id="KW-0997">Cell inner membrane</keyword>
<keyword id="KW-1003">Cell membrane</keyword>
<keyword id="KW-0139">CF(1)</keyword>
<keyword id="KW-0375">Hydrogen ion transport</keyword>
<keyword id="KW-0406">Ion transport</keyword>
<keyword id="KW-0472">Membrane</keyword>
<keyword id="KW-0547">Nucleotide-binding</keyword>
<keyword id="KW-1185">Reference proteome</keyword>
<keyword id="KW-1278">Translocase</keyword>
<keyword id="KW-0813">Transport</keyword>
<organism>
    <name type="scientific">Brucella abortus (strain 2308)</name>
    <dbReference type="NCBI Taxonomy" id="359391"/>
    <lineage>
        <taxon>Bacteria</taxon>
        <taxon>Pseudomonadati</taxon>
        <taxon>Pseudomonadota</taxon>
        <taxon>Alphaproteobacteria</taxon>
        <taxon>Hyphomicrobiales</taxon>
        <taxon>Brucellaceae</taxon>
        <taxon>Brucella/Ochrobactrum group</taxon>
        <taxon>Brucella</taxon>
    </lineage>
</organism>
<feature type="chain" id="PRO_0000254227" description="ATP synthase subunit beta">
    <location>
        <begin position="1"/>
        <end position="521"/>
    </location>
</feature>
<feature type="region of interest" description="Disordered" evidence="2">
    <location>
        <begin position="1"/>
        <end position="42"/>
    </location>
</feature>
<feature type="compositionally biased region" description="Low complexity" evidence="2">
    <location>
        <begin position="1"/>
        <end position="21"/>
    </location>
</feature>
<feature type="compositionally biased region" description="Low complexity" evidence="2">
    <location>
        <begin position="28"/>
        <end position="42"/>
    </location>
</feature>
<feature type="binding site" evidence="1">
    <location>
        <begin position="199"/>
        <end position="206"/>
    </location>
    <ligand>
        <name>ATP</name>
        <dbReference type="ChEBI" id="CHEBI:30616"/>
    </ligand>
</feature>
<proteinExistence type="inferred from homology"/>
<reference key="1">
    <citation type="journal article" date="2005" name="Infect. Immun.">
        <title>Whole-genome analyses of speciation events in pathogenic Brucellae.</title>
        <authorList>
            <person name="Chain P.S."/>
            <person name="Comerci D.J."/>
            <person name="Tolmasky M.E."/>
            <person name="Larimer F.W."/>
            <person name="Malfatti S.A."/>
            <person name="Vergez L.M."/>
            <person name="Aguero F."/>
            <person name="Land M.L."/>
            <person name="Ugalde R.A."/>
            <person name="Garcia E."/>
        </authorList>
    </citation>
    <scope>NUCLEOTIDE SEQUENCE [LARGE SCALE GENOMIC DNA]</scope>
    <source>
        <strain>2308</strain>
    </source>
</reference>
<name>ATPB_BRUA2</name>
<dbReference type="EC" id="7.1.2.2" evidence="1"/>
<dbReference type="EMBL" id="AM040264">
    <property type="protein sequence ID" value="CAJ11763.1"/>
    <property type="molecule type" value="Genomic_DNA"/>
</dbReference>
<dbReference type="RefSeq" id="WP_002966968.1">
    <property type="nucleotide sequence ID" value="NZ_KN046823.1"/>
</dbReference>
<dbReference type="SMR" id="Q2YLE6"/>
<dbReference type="STRING" id="359391.BAB1_1807"/>
<dbReference type="GeneID" id="93017861"/>
<dbReference type="KEGG" id="bmf:BAB1_1807"/>
<dbReference type="PATRIC" id="fig|359391.11.peg.317"/>
<dbReference type="HOGENOM" id="CLU_022398_0_2_5"/>
<dbReference type="PhylomeDB" id="Q2YLE6"/>
<dbReference type="Proteomes" id="UP000002719">
    <property type="component" value="Chromosome I"/>
</dbReference>
<dbReference type="GO" id="GO:0005886">
    <property type="term" value="C:plasma membrane"/>
    <property type="evidence" value="ECO:0007669"/>
    <property type="project" value="UniProtKB-SubCell"/>
</dbReference>
<dbReference type="GO" id="GO:0045259">
    <property type="term" value="C:proton-transporting ATP synthase complex"/>
    <property type="evidence" value="ECO:0007669"/>
    <property type="project" value="UniProtKB-KW"/>
</dbReference>
<dbReference type="GO" id="GO:0005524">
    <property type="term" value="F:ATP binding"/>
    <property type="evidence" value="ECO:0007669"/>
    <property type="project" value="UniProtKB-UniRule"/>
</dbReference>
<dbReference type="GO" id="GO:0016887">
    <property type="term" value="F:ATP hydrolysis activity"/>
    <property type="evidence" value="ECO:0007669"/>
    <property type="project" value="InterPro"/>
</dbReference>
<dbReference type="GO" id="GO:0046933">
    <property type="term" value="F:proton-transporting ATP synthase activity, rotational mechanism"/>
    <property type="evidence" value="ECO:0007669"/>
    <property type="project" value="UniProtKB-UniRule"/>
</dbReference>
<dbReference type="CDD" id="cd18110">
    <property type="entry name" value="ATP-synt_F1_beta_C"/>
    <property type="match status" value="1"/>
</dbReference>
<dbReference type="CDD" id="cd18115">
    <property type="entry name" value="ATP-synt_F1_beta_N"/>
    <property type="match status" value="1"/>
</dbReference>
<dbReference type="CDD" id="cd01133">
    <property type="entry name" value="F1-ATPase_beta_CD"/>
    <property type="match status" value="1"/>
</dbReference>
<dbReference type="FunFam" id="1.10.1140.10:FF:000001">
    <property type="entry name" value="ATP synthase subunit beta"/>
    <property type="match status" value="1"/>
</dbReference>
<dbReference type="FunFam" id="2.40.10.170:FF:000005">
    <property type="entry name" value="ATP synthase subunit beta"/>
    <property type="match status" value="1"/>
</dbReference>
<dbReference type="FunFam" id="3.40.50.300:FF:000026">
    <property type="entry name" value="ATP synthase subunit beta"/>
    <property type="match status" value="1"/>
</dbReference>
<dbReference type="Gene3D" id="2.40.10.170">
    <property type="match status" value="1"/>
</dbReference>
<dbReference type="Gene3D" id="1.10.1140.10">
    <property type="entry name" value="Bovine Mitochondrial F1-atpase, Atp Synthase Beta Chain, Chain D, domain 3"/>
    <property type="match status" value="1"/>
</dbReference>
<dbReference type="Gene3D" id="3.40.50.300">
    <property type="entry name" value="P-loop containing nucleotide triphosphate hydrolases"/>
    <property type="match status" value="1"/>
</dbReference>
<dbReference type="HAMAP" id="MF_01347">
    <property type="entry name" value="ATP_synth_beta_bact"/>
    <property type="match status" value="1"/>
</dbReference>
<dbReference type="InterPro" id="IPR003593">
    <property type="entry name" value="AAA+_ATPase"/>
</dbReference>
<dbReference type="InterPro" id="IPR055190">
    <property type="entry name" value="ATP-synt_VA_C"/>
</dbReference>
<dbReference type="InterPro" id="IPR005722">
    <property type="entry name" value="ATP_synth_F1_bsu"/>
</dbReference>
<dbReference type="InterPro" id="IPR020003">
    <property type="entry name" value="ATPase_a/bsu_AS"/>
</dbReference>
<dbReference type="InterPro" id="IPR050053">
    <property type="entry name" value="ATPase_alpha/beta_chains"/>
</dbReference>
<dbReference type="InterPro" id="IPR004100">
    <property type="entry name" value="ATPase_F1/V1/A1_a/bsu_N"/>
</dbReference>
<dbReference type="InterPro" id="IPR036121">
    <property type="entry name" value="ATPase_F1/V1/A1_a/bsu_N_sf"/>
</dbReference>
<dbReference type="InterPro" id="IPR000194">
    <property type="entry name" value="ATPase_F1/V1/A1_a/bsu_nucl-bd"/>
</dbReference>
<dbReference type="InterPro" id="IPR024034">
    <property type="entry name" value="ATPase_F1/V1_b/a_C"/>
</dbReference>
<dbReference type="InterPro" id="IPR027417">
    <property type="entry name" value="P-loop_NTPase"/>
</dbReference>
<dbReference type="NCBIfam" id="TIGR01039">
    <property type="entry name" value="atpD"/>
    <property type="match status" value="1"/>
</dbReference>
<dbReference type="PANTHER" id="PTHR15184">
    <property type="entry name" value="ATP SYNTHASE"/>
    <property type="match status" value="1"/>
</dbReference>
<dbReference type="PANTHER" id="PTHR15184:SF71">
    <property type="entry name" value="ATP SYNTHASE SUBUNIT BETA, MITOCHONDRIAL"/>
    <property type="match status" value="1"/>
</dbReference>
<dbReference type="Pfam" id="PF00006">
    <property type="entry name" value="ATP-synt_ab"/>
    <property type="match status" value="1"/>
</dbReference>
<dbReference type="Pfam" id="PF02874">
    <property type="entry name" value="ATP-synt_ab_N"/>
    <property type="match status" value="1"/>
</dbReference>
<dbReference type="Pfam" id="PF22919">
    <property type="entry name" value="ATP-synt_VA_C"/>
    <property type="match status" value="1"/>
</dbReference>
<dbReference type="PIRSF" id="PIRSF039072">
    <property type="entry name" value="ATPase_subunit_beta"/>
    <property type="match status" value="1"/>
</dbReference>
<dbReference type="SMART" id="SM00382">
    <property type="entry name" value="AAA"/>
    <property type="match status" value="1"/>
</dbReference>
<dbReference type="SUPFAM" id="SSF47917">
    <property type="entry name" value="C-terminal domain of alpha and beta subunits of F1 ATP synthase"/>
    <property type="match status" value="1"/>
</dbReference>
<dbReference type="SUPFAM" id="SSF50615">
    <property type="entry name" value="N-terminal domain of alpha and beta subunits of F1 ATP synthase"/>
    <property type="match status" value="1"/>
</dbReference>
<dbReference type="SUPFAM" id="SSF52540">
    <property type="entry name" value="P-loop containing nucleoside triphosphate hydrolases"/>
    <property type="match status" value="1"/>
</dbReference>
<dbReference type="PROSITE" id="PS00152">
    <property type="entry name" value="ATPASE_ALPHA_BETA"/>
    <property type="match status" value="1"/>
</dbReference>